<protein>
    <recommendedName>
        <fullName evidence="1">Large ribosomal subunit protein bL35</fullName>
    </recommendedName>
    <alternativeName>
        <fullName evidence="2">50S ribosomal protein L35</fullName>
    </alternativeName>
</protein>
<name>RL35_AZOC5</name>
<organism>
    <name type="scientific">Azorhizobium caulinodans (strain ATCC 43989 / DSM 5975 / JCM 20966 / LMG 6465 / NBRC 14845 / NCIMB 13405 / ORS 571)</name>
    <dbReference type="NCBI Taxonomy" id="438753"/>
    <lineage>
        <taxon>Bacteria</taxon>
        <taxon>Pseudomonadati</taxon>
        <taxon>Pseudomonadota</taxon>
        <taxon>Alphaproteobacteria</taxon>
        <taxon>Hyphomicrobiales</taxon>
        <taxon>Xanthobacteraceae</taxon>
        <taxon>Azorhizobium</taxon>
    </lineage>
</organism>
<comment type="similarity">
    <text evidence="1">Belongs to the bacterial ribosomal protein bL35 family.</text>
</comment>
<reference key="1">
    <citation type="submission" date="2007-04" db="EMBL/GenBank/DDBJ databases">
        <title>Complete genome sequence of the nitrogen-fixing bacterium Azorhizobium caulinodans ORS571.</title>
        <authorList>
            <person name="Lee K.B."/>
            <person name="Backer P.D."/>
            <person name="Aono T."/>
            <person name="Liu C.T."/>
            <person name="Suzuki S."/>
            <person name="Suzuki T."/>
            <person name="Kaneko T."/>
            <person name="Yamada M."/>
            <person name="Tabata S."/>
            <person name="Kupfer D.M."/>
            <person name="Najar F.Z."/>
            <person name="Wiley G.B."/>
            <person name="Roe B."/>
            <person name="Binnewies T."/>
            <person name="Ussery D."/>
            <person name="Vereecke D."/>
            <person name="Gevers D."/>
            <person name="Holsters M."/>
            <person name="Oyaizu H."/>
        </authorList>
    </citation>
    <scope>NUCLEOTIDE SEQUENCE [LARGE SCALE GENOMIC DNA]</scope>
    <source>
        <strain>ATCC 43989 / DSM 5975 / JCM 20966 / LMG 6465 / NBRC 14845 / NCIMB 13405 / ORS 571</strain>
    </source>
</reference>
<gene>
    <name evidence="1" type="primary">rpmI</name>
    <name type="ordered locus">AZC_4447</name>
</gene>
<dbReference type="EMBL" id="AP009384">
    <property type="protein sequence ID" value="BAF90445.1"/>
    <property type="molecule type" value="Genomic_DNA"/>
</dbReference>
<dbReference type="RefSeq" id="WP_012172966.1">
    <property type="nucleotide sequence ID" value="NC_009937.1"/>
</dbReference>
<dbReference type="SMR" id="A8HWM0"/>
<dbReference type="STRING" id="438753.AZC_4447"/>
<dbReference type="KEGG" id="azc:AZC_4447"/>
<dbReference type="eggNOG" id="COG0291">
    <property type="taxonomic scope" value="Bacteria"/>
</dbReference>
<dbReference type="HOGENOM" id="CLU_169643_2_1_5"/>
<dbReference type="Proteomes" id="UP000000270">
    <property type="component" value="Chromosome"/>
</dbReference>
<dbReference type="GO" id="GO:0022625">
    <property type="term" value="C:cytosolic large ribosomal subunit"/>
    <property type="evidence" value="ECO:0007669"/>
    <property type="project" value="TreeGrafter"/>
</dbReference>
<dbReference type="GO" id="GO:0003735">
    <property type="term" value="F:structural constituent of ribosome"/>
    <property type="evidence" value="ECO:0007669"/>
    <property type="project" value="InterPro"/>
</dbReference>
<dbReference type="GO" id="GO:0006412">
    <property type="term" value="P:translation"/>
    <property type="evidence" value="ECO:0007669"/>
    <property type="project" value="UniProtKB-UniRule"/>
</dbReference>
<dbReference type="FunFam" id="4.10.410.60:FF:000001">
    <property type="entry name" value="50S ribosomal protein L35"/>
    <property type="match status" value="1"/>
</dbReference>
<dbReference type="Gene3D" id="4.10.410.60">
    <property type="match status" value="1"/>
</dbReference>
<dbReference type="HAMAP" id="MF_00514">
    <property type="entry name" value="Ribosomal_bL35"/>
    <property type="match status" value="1"/>
</dbReference>
<dbReference type="InterPro" id="IPR001706">
    <property type="entry name" value="Ribosomal_bL35"/>
</dbReference>
<dbReference type="InterPro" id="IPR021137">
    <property type="entry name" value="Ribosomal_bL35-like"/>
</dbReference>
<dbReference type="InterPro" id="IPR018265">
    <property type="entry name" value="Ribosomal_bL35_CS"/>
</dbReference>
<dbReference type="InterPro" id="IPR037229">
    <property type="entry name" value="Ribosomal_bL35_sf"/>
</dbReference>
<dbReference type="NCBIfam" id="TIGR00001">
    <property type="entry name" value="rpmI_bact"/>
    <property type="match status" value="1"/>
</dbReference>
<dbReference type="PANTHER" id="PTHR33343">
    <property type="entry name" value="54S RIBOSOMAL PROTEIN BL35M"/>
    <property type="match status" value="1"/>
</dbReference>
<dbReference type="PANTHER" id="PTHR33343:SF1">
    <property type="entry name" value="LARGE RIBOSOMAL SUBUNIT PROTEIN BL35M"/>
    <property type="match status" value="1"/>
</dbReference>
<dbReference type="Pfam" id="PF01632">
    <property type="entry name" value="Ribosomal_L35p"/>
    <property type="match status" value="1"/>
</dbReference>
<dbReference type="PRINTS" id="PR00064">
    <property type="entry name" value="RIBOSOMALL35"/>
</dbReference>
<dbReference type="SUPFAM" id="SSF143034">
    <property type="entry name" value="L35p-like"/>
    <property type="match status" value="1"/>
</dbReference>
<dbReference type="PROSITE" id="PS00936">
    <property type="entry name" value="RIBOSOMAL_L35"/>
    <property type="match status" value="1"/>
</dbReference>
<evidence type="ECO:0000255" key="1">
    <source>
        <dbReference type="HAMAP-Rule" id="MF_00514"/>
    </source>
</evidence>
<evidence type="ECO:0000305" key="2"/>
<feature type="chain" id="PRO_1000072475" description="Large ribosomal subunit protein bL35">
    <location>
        <begin position="1"/>
        <end position="66"/>
    </location>
</feature>
<keyword id="KW-1185">Reference proteome</keyword>
<keyword id="KW-0687">Ribonucleoprotein</keyword>
<keyword id="KW-0689">Ribosomal protein</keyword>
<sequence length="66" mass="7341">MPKMKTKSGAKKRFRLTGTGKVIAGQAGKRHGMIKRTNKTIRNQRGTNILCESDGRIIRKSFLPNG</sequence>
<proteinExistence type="inferred from homology"/>
<accession>A8HWM0</accession>